<dbReference type="EMBL" id="FQ312003">
    <property type="protein sequence ID" value="CBW17032.1"/>
    <property type="molecule type" value="Genomic_DNA"/>
</dbReference>
<dbReference type="RefSeq" id="WP_000977713.1">
    <property type="nucleotide sequence ID" value="NZ_QASL01000022.1"/>
</dbReference>
<dbReference type="SMR" id="A0A0H3N9T8"/>
<dbReference type="KEGG" id="sey:SL1344_0936"/>
<dbReference type="PATRIC" id="fig|216597.6.peg.1042"/>
<dbReference type="HOGENOM" id="CLU_058202_0_0_6"/>
<dbReference type="BioCyc" id="SENT216597:SL1344_RS04860-MONOMER"/>
<dbReference type="Proteomes" id="UP000008962">
    <property type="component" value="Chromosome"/>
</dbReference>
<dbReference type="GO" id="GO:0009279">
    <property type="term" value="C:cell outer membrane"/>
    <property type="evidence" value="ECO:0007669"/>
    <property type="project" value="UniProtKB-SubCell"/>
</dbReference>
<dbReference type="GO" id="GO:0046930">
    <property type="term" value="C:pore complex"/>
    <property type="evidence" value="ECO:0007669"/>
    <property type="project" value="UniProtKB-KW"/>
</dbReference>
<dbReference type="GO" id="GO:0015288">
    <property type="term" value="F:porin activity"/>
    <property type="evidence" value="ECO:0007669"/>
    <property type="project" value="UniProtKB-KW"/>
</dbReference>
<dbReference type="GO" id="GO:0034220">
    <property type="term" value="P:monoatomic ion transmembrane transport"/>
    <property type="evidence" value="ECO:0007669"/>
    <property type="project" value="InterPro"/>
</dbReference>
<dbReference type="CDD" id="cd00342">
    <property type="entry name" value="gram_neg_porins"/>
    <property type="match status" value="1"/>
</dbReference>
<dbReference type="Gene3D" id="2.40.160.10">
    <property type="entry name" value="Porin"/>
    <property type="match status" value="1"/>
</dbReference>
<dbReference type="InterPro" id="IPR050298">
    <property type="entry name" value="Gram-neg_bact_OMP"/>
</dbReference>
<dbReference type="InterPro" id="IPR033900">
    <property type="entry name" value="Gram_neg_porin_domain"/>
</dbReference>
<dbReference type="InterPro" id="IPR023614">
    <property type="entry name" value="Porin_dom_sf"/>
</dbReference>
<dbReference type="InterPro" id="IPR001897">
    <property type="entry name" value="Porin_gammaproteobac"/>
</dbReference>
<dbReference type="InterPro" id="IPR001702">
    <property type="entry name" value="Porin_Gram-ve"/>
</dbReference>
<dbReference type="InterPro" id="IPR013793">
    <property type="entry name" value="Porin_Gram-ve_CS"/>
</dbReference>
<dbReference type="PANTHER" id="PTHR34501:SF8">
    <property type="entry name" value="OUTER MEMBRANE PORIN N-RELATED"/>
    <property type="match status" value="1"/>
</dbReference>
<dbReference type="PANTHER" id="PTHR34501">
    <property type="entry name" value="PROTEIN YDDL-RELATED"/>
    <property type="match status" value="1"/>
</dbReference>
<dbReference type="Pfam" id="PF00267">
    <property type="entry name" value="Porin_1"/>
    <property type="match status" value="1"/>
</dbReference>
<dbReference type="PRINTS" id="PR00183">
    <property type="entry name" value="ECOLIPORIN"/>
</dbReference>
<dbReference type="PRINTS" id="PR00182">
    <property type="entry name" value="ECOLNEIPORIN"/>
</dbReference>
<dbReference type="SUPFAM" id="SSF56935">
    <property type="entry name" value="Porins"/>
    <property type="match status" value="1"/>
</dbReference>
<dbReference type="PROSITE" id="PS00576">
    <property type="entry name" value="GRAM_NEG_PORIN"/>
    <property type="match status" value="1"/>
</dbReference>
<name>OMPF_SALTS</name>
<reference key="1">
    <citation type="journal article" date="2012" name="Proc. Natl. Acad. Sci. U.S.A.">
        <title>The transcriptional landscape and small RNAs of Salmonella enterica serovar Typhimurium.</title>
        <authorList>
            <person name="Kroger C."/>
            <person name="Dillon S.C."/>
            <person name="Cameron A.D."/>
            <person name="Papenfort K."/>
            <person name="Sivasankaran S.K."/>
            <person name="Hokamp K."/>
            <person name="Chao Y."/>
            <person name="Sittka A."/>
            <person name="Hebrard M."/>
            <person name="Handler K."/>
            <person name="Colgan A."/>
            <person name="Leekitcharoenphon P."/>
            <person name="Langridge G.C."/>
            <person name="Lohan A.J."/>
            <person name="Loftus B."/>
            <person name="Lucchini S."/>
            <person name="Ussery D.W."/>
            <person name="Dorman C.J."/>
            <person name="Thomson N.R."/>
            <person name="Vogel J."/>
            <person name="Hinton J.C."/>
        </authorList>
    </citation>
    <scope>NUCLEOTIDE SEQUENCE [LARGE SCALE GENOMIC DNA]</scope>
    <source>
        <strain>SL1344</strain>
    </source>
</reference>
<reference key="2">
    <citation type="journal article" date="1989" name="Infect. Immun.">
        <title>Characterization of porin and ompR mutants of a virulent strain of Salmonella typhimurium: ompR mutants are attenuated in vivo.</title>
        <authorList>
            <person name="Dorman C.J."/>
            <person name="Chatfield S."/>
            <person name="Higgins C.F."/>
            <person name="Hayward C."/>
            <person name="Dougan G."/>
        </authorList>
    </citation>
    <scope>INDUCTION</scope>
    <scope>DISRUPTION PHENOTYPE</scope>
    <source>
        <strain>SL1344</strain>
    </source>
</reference>
<gene>
    <name evidence="4" type="primary">ompF</name>
    <name type="ordered locus">SL1344_0936</name>
</gene>
<protein>
    <recommendedName>
        <fullName evidence="4">Outer membrane porin F</fullName>
    </recommendedName>
    <alternativeName>
        <fullName>Outer membrane protein F</fullName>
    </alternativeName>
    <alternativeName>
        <fullName>Porin OmpF</fullName>
    </alternativeName>
</protein>
<feature type="signal peptide" evidence="2">
    <location>
        <begin position="1"/>
        <end position="22"/>
    </location>
</feature>
<feature type="chain" id="PRO_5002616374" description="Outer membrane porin F" evidence="2">
    <location>
        <begin position="23"/>
        <end position="363"/>
    </location>
</feature>
<keyword id="KW-0998">Cell outer membrane</keyword>
<keyword id="KW-0406">Ion transport</keyword>
<keyword id="KW-0472">Membrane</keyword>
<keyword id="KW-0626">Porin</keyword>
<keyword id="KW-0732">Signal</keyword>
<keyword id="KW-0812">Transmembrane</keyword>
<keyword id="KW-1134">Transmembrane beta strand</keyword>
<keyword id="KW-0813">Transport</keyword>
<proteinExistence type="evidence at transcript level"/>
<comment type="function">
    <text evidence="5">Forms pores that allow passive diffusion of small molecules across the outer membrane.</text>
</comment>
<comment type="subunit">
    <text evidence="1">Homotrimer. Forms mixed heterotrimers with OmpC and with PhoE; other mixed heterotrimers with other porins are also probable.</text>
</comment>
<comment type="subcellular location">
    <subcellularLocation>
        <location evidence="1">Cell outer membrane</location>
        <topology evidence="1">Multi-pass membrane protein</topology>
    </subcellularLocation>
</comment>
<comment type="induction">
    <text evidence="3">Not expressed at high osmolarity, probably expressed at low osmolarity.</text>
</comment>
<comment type="disruption phenotype">
    <text evidence="3">No effect on virulence in male BALB/c mice.</text>
</comment>
<comment type="similarity">
    <text evidence="5">Belongs to the Gram-negative porin family.</text>
</comment>
<organism>
    <name type="scientific">Salmonella typhimurium (strain SL1344)</name>
    <dbReference type="NCBI Taxonomy" id="216597"/>
    <lineage>
        <taxon>Bacteria</taxon>
        <taxon>Pseudomonadati</taxon>
        <taxon>Pseudomonadota</taxon>
        <taxon>Gammaproteobacteria</taxon>
        <taxon>Enterobacterales</taxon>
        <taxon>Enterobacteriaceae</taxon>
        <taxon>Salmonella</taxon>
    </lineage>
</organism>
<evidence type="ECO:0000250" key="1">
    <source>
        <dbReference type="UniProtKB" id="P02931"/>
    </source>
</evidence>
<evidence type="ECO:0000255" key="2"/>
<evidence type="ECO:0000269" key="3">
    <source>
    </source>
</evidence>
<evidence type="ECO:0000303" key="4">
    <source>
    </source>
</evidence>
<evidence type="ECO:0000305" key="5"/>
<sequence>MMKRKILAAVIPALLAAATANAAEIYNKDGNKLDLYGKAVGRHVWTTTGDSKNADQTYAQIGFKGETQINTDLTGFGQWEYRTKADRAEGEQQNSNLVRLAFAGLKYAEVGSIDYGRNYGIVYDVESYTDMAPYFSGETWGGAYTDNYMTSRAGGLLTYRNSDFFGLVDGLSFGIQYQGKNQDNHSINSQNGDGVGYTMAYEFDGFGVTAAYSNSKRTNDQQDRDGNGDRAESWAVGAKYDANNVYLAAVYAETRNMSIVENTVTDTVEMANKTQNLEVVAQYQFDFGLRPAISYVQSKGKQLNGAGGSADLAKYIQAGATYYFNKNMNVWVDYRFNLLDENDYSSSYVGTDDQAAVGITYQF</sequence>
<accession>A0A0H3N9T8</accession>